<accession>A8I8V7</accession>
<reference key="1">
    <citation type="submission" date="2007-04" db="EMBL/GenBank/DDBJ databases">
        <title>Complete genome sequence of the nitrogen-fixing bacterium Azorhizobium caulinodans ORS571.</title>
        <authorList>
            <person name="Lee K.B."/>
            <person name="Backer P.D."/>
            <person name="Aono T."/>
            <person name="Liu C.T."/>
            <person name="Suzuki S."/>
            <person name="Suzuki T."/>
            <person name="Kaneko T."/>
            <person name="Yamada M."/>
            <person name="Tabata S."/>
            <person name="Kupfer D.M."/>
            <person name="Najar F.Z."/>
            <person name="Wiley G.B."/>
            <person name="Roe B."/>
            <person name="Binnewies T."/>
            <person name="Ussery D."/>
            <person name="Vereecke D."/>
            <person name="Gevers D."/>
            <person name="Holsters M."/>
            <person name="Oyaizu H."/>
        </authorList>
    </citation>
    <scope>NUCLEOTIDE SEQUENCE [LARGE SCALE GENOMIC DNA]</scope>
    <source>
        <strain>ATCC 43989 / DSM 5975 / JCM 20966 / LMG 6465 / NBRC 14845 / NCIMB 13405 / ORS 571</strain>
    </source>
</reference>
<dbReference type="EC" id="2.7.1.30" evidence="1"/>
<dbReference type="EMBL" id="AP009384">
    <property type="protein sequence ID" value="BAF88708.1"/>
    <property type="molecule type" value="Genomic_DNA"/>
</dbReference>
<dbReference type="RefSeq" id="WP_012171234.1">
    <property type="nucleotide sequence ID" value="NC_009937.1"/>
</dbReference>
<dbReference type="SMR" id="A8I8V7"/>
<dbReference type="STRING" id="438753.AZC_2710"/>
<dbReference type="KEGG" id="azc:AZC_2710"/>
<dbReference type="eggNOG" id="COG0554">
    <property type="taxonomic scope" value="Bacteria"/>
</dbReference>
<dbReference type="HOGENOM" id="CLU_009281_2_3_5"/>
<dbReference type="UniPathway" id="UPA00618">
    <property type="reaction ID" value="UER00672"/>
</dbReference>
<dbReference type="Proteomes" id="UP000000270">
    <property type="component" value="Chromosome"/>
</dbReference>
<dbReference type="GO" id="GO:0005829">
    <property type="term" value="C:cytosol"/>
    <property type="evidence" value="ECO:0007669"/>
    <property type="project" value="TreeGrafter"/>
</dbReference>
<dbReference type="GO" id="GO:0005524">
    <property type="term" value="F:ATP binding"/>
    <property type="evidence" value="ECO:0007669"/>
    <property type="project" value="UniProtKB-UniRule"/>
</dbReference>
<dbReference type="GO" id="GO:0004370">
    <property type="term" value="F:glycerol kinase activity"/>
    <property type="evidence" value="ECO:0000250"/>
    <property type="project" value="UniProtKB"/>
</dbReference>
<dbReference type="GO" id="GO:0019563">
    <property type="term" value="P:glycerol catabolic process"/>
    <property type="evidence" value="ECO:0007669"/>
    <property type="project" value="UniProtKB-UniRule"/>
</dbReference>
<dbReference type="GO" id="GO:0006071">
    <property type="term" value="P:glycerol metabolic process"/>
    <property type="evidence" value="ECO:0000250"/>
    <property type="project" value="UniProtKB"/>
</dbReference>
<dbReference type="GO" id="GO:0006072">
    <property type="term" value="P:glycerol-3-phosphate metabolic process"/>
    <property type="evidence" value="ECO:0007669"/>
    <property type="project" value="InterPro"/>
</dbReference>
<dbReference type="CDD" id="cd07769">
    <property type="entry name" value="ASKHA_NBD_FGGY_GK"/>
    <property type="match status" value="1"/>
</dbReference>
<dbReference type="FunFam" id="3.30.420.40:FF:000007">
    <property type="entry name" value="Glycerol kinase"/>
    <property type="match status" value="1"/>
</dbReference>
<dbReference type="FunFam" id="3.30.420.40:FF:000008">
    <property type="entry name" value="Glycerol kinase"/>
    <property type="match status" value="1"/>
</dbReference>
<dbReference type="Gene3D" id="3.30.420.40">
    <property type="match status" value="2"/>
</dbReference>
<dbReference type="HAMAP" id="MF_00186">
    <property type="entry name" value="Glycerol_kin"/>
    <property type="match status" value="1"/>
</dbReference>
<dbReference type="InterPro" id="IPR043129">
    <property type="entry name" value="ATPase_NBD"/>
</dbReference>
<dbReference type="InterPro" id="IPR000577">
    <property type="entry name" value="Carb_kinase_FGGY"/>
</dbReference>
<dbReference type="InterPro" id="IPR018483">
    <property type="entry name" value="Carb_kinase_FGGY_CS"/>
</dbReference>
<dbReference type="InterPro" id="IPR018485">
    <property type="entry name" value="FGGY_C"/>
</dbReference>
<dbReference type="InterPro" id="IPR018484">
    <property type="entry name" value="FGGY_N"/>
</dbReference>
<dbReference type="InterPro" id="IPR005999">
    <property type="entry name" value="Glycerol_kin"/>
</dbReference>
<dbReference type="NCBIfam" id="TIGR01311">
    <property type="entry name" value="glycerol_kin"/>
    <property type="match status" value="1"/>
</dbReference>
<dbReference type="NCBIfam" id="NF000756">
    <property type="entry name" value="PRK00047.1"/>
    <property type="match status" value="1"/>
</dbReference>
<dbReference type="PANTHER" id="PTHR10196:SF69">
    <property type="entry name" value="GLYCEROL KINASE"/>
    <property type="match status" value="1"/>
</dbReference>
<dbReference type="PANTHER" id="PTHR10196">
    <property type="entry name" value="SUGAR KINASE"/>
    <property type="match status" value="1"/>
</dbReference>
<dbReference type="Pfam" id="PF02782">
    <property type="entry name" value="FGGY_C"/>
    <property type="match status" value="1"/>
</dbReference>
<dbReference type="Pfam" id="PF00370">
    <property type="entry name" value="FGGY_N"/>
    <property type="match status" value="1"/>
</dbReference>
<dbReference type="PIRSF" id="PIRSF000538">
    <property type="entry name" value="GlpK"/>
    <property type="match status" value="1"/>
</dbReference>
<dbReference type="SUPFAM" id="SSF53067">
    <property type="entry name" value="Actin-like ATPase domain"/>
    <property type="match status" value="2"/>
</dbReference>
<dbReference type="PROSITE" id="PS00933">
    <property type="entry name" value="FGGY_KINASES_1"/>
    <property type="match status" value="1"/>
</dbReference>
<dbReference type="PROSITE" id="PS00445">
    <property type="entry name" value="FGGY_KINASES_2"/>
    <property type="match status" value="1"/>
</dbReference>
<evidence type="ECO:0000255" key="1">
    <source>
        <dbReference type="HAMAP-Rule" id="MF_00186"/>
    </source>
</evidence>
<organism>
    <name type="scientific">Azorhizobium caulinodans (strain ATCC 43989 / DSM 5975 / JCM 20966 / LMG 6465 / NBRC 14845 / NCIMB 13405 / ORS 571)</name>
    <dbReference type="NCBI Taxonomy" id="438753"/>
    <lineage>
        <taxon>Bacteria</taxon>
        <taxon>Pseudomonadati</taxon>
        <taxon>Pseudomonadota</taxon>
        <taxon>Alphaproteobacteria</taxon>
        <taxon>Hyphomicrobiales</taxon>
        <taxon>Xanthobacteraceae</taxon>
        <taxon>Azorhizobium</taxon>
    </lineage>
</organism>
<gene>
    <name evidence="1" type="primary">glpK</name>
    <name type="ordered locus">AZC_2710</name>
</gene>
<name>GLPK_AZOC5</name>
<proteinExistence type="inferred from homology"/>
<sequence>MTKYVGAIDQGTTSTRFIVFDRKGQIFSVAQREHEQIYPRPGWVEHNAVEIWLNTRTVILEALEKKGLSTSDLAAVGVTNQRETALLWDRKTGEPLYNALVWQDTRTDQLVARYAKEGGQDRLRAKTGLPLATYFSGLKLHWILDNVPGARAKAEAGDALFGNIDTWLLWNLTGGPDGGIHITDVTNASRTQLMDLEKLAWDEDILKLFNIPAACLPRIVSSSERYGTGKGPLEGVTLSGILGDQQAALFGQACLHPGEAKNTYGTGNFMLMNTGEKPFPSTCGLITTVGYKLGDAKAVYALEGSIAITGALVQWLRDNLGIIKNSADIEPLARTVSDNGDVYFVPAFSGLYAPRWDDSARGVVCGLTRFANKGHIARAALEATAYQTREVLEAMVKDSKVAIRELRTDGGMVVNELLMQFQADMVNVPVVRPKVIETTALGAAYAAGLAVGYWASTDDITQNWGVDRRWHPHMAAEQREHLYGSWNKAVERSLGWAR</sequence>
<protein>
    <recommendedName>
        <fullName evidence="1">Glycerol kinase</fullName>
        <ecNumber evidence="1">2.7.1.30</ecNumber>
    </recommendedName>
    <alternativeName>
        <fullName evidence="1">ATP:glycerol 3-phosphotransferase</fullName>
    </alternativeName>
    <alternativeName>
        <fullName evidence="1">Glycerokinase</fullName>
        <shortName evidence="1">GK</shortName>
    </alternativeName>
</protein>
<comment type="function">
    <text evidence="1">Key enzyme in the regulation of glycerol uptake and metabolism. Catalyzes the phosphorylation of glycerol to yield sn-glycerol 3-phosphate.</text>
</comment>
<comment type="catalytic activity">
    <reaction evidence="1">
        <text>glycerol + ATP = sn-glycerol 3-phosphate + ADP + H(+)</text>
        <dbReference type="Rhea" id="RHEA:21644"/>
        <dbReference type="ChEBI" id="CHEBI:15378"/>
        <dbReference type="ChEBI" id="CHEBI:17754"/>
        <dbReference type="ChEBI" id="CHEBI:30616"/>
        <dbReference type="ChEBI" id="CHEBI:57597"/>
        <dbReference type="ChEBI" id="CHEBI:456216"/>
        <dbReference type="EC" id="2.7.1.30"/>
    </reaction>
</comment>
<comment type="activity regulation">
    <text evidence="1">Inhibited by fructose 1,6-bisphosphate (FBP).</text>
</comment>
<comment type="pathway">
    <text evidence="1">Polyol metabolism; glycerol degradation via glycerol kinase pathway; sn-glycerol 3-phosphate from glycerol: step 1/1.</text>
</comment>
<comment type="similarity">
    <text evidence="1">Belongs to the FGGY kinase family.</text>
</comment>
<keyword id="KW-0067">ATP-binding</keyword>
<keyword id="KW-0319">Glycerol metabolism</keyword>
<keyword id="KW-0418">Kinase</keyword>
<keyword id="KW-0547">Nucleotide-binding</keyword>
<keyword id="KW-1185">Reference proteome</keyword>
<keyword id="KW-0808">Transferase</keyword>
<feature type="chain" id="PRO_1000071684" description="Glycerol kinase">
    <location>
        <begin position="1"/>
        <end position="498"/>
    </location>
</feature>
<feature type="binding site" evidence="1">
    <location>
        <position position="12"/>
    </location>
    <ligand>
        <name>ADP</name>
        <dbReference type="ChEBI" id="CHEBI:456216"/>
    </ligand>
</feature>
<feature type="binding site" evidence="1">
    <location>
        <position position="12"/>
    </location>
    <ligand>
        <name>ATP</name>
        <dbReference type="ChEBI" id="CHEBI:30616"/>
    </ligand>
</feature>
<feature type="binding site" evidence="1">
    <location>
        <position position="12"/>
    </location>
    <ligand>
        <name>sn-glycerol 3-phosphate</name>
        <dbReference type="ChEBI" id="CHEBI:57597"/>
    </ligand>
</feature>
<feature type="binding site" evidence="1">
    <location>
        <position position="13"/>
    </location>
    <ligand>
        <name>ATP</name>
        <dbReference type="ChEBI" id="CHEBI:30616"/>
    </ligand>
</feature>
<feature type="binding site" evidence="1">
    <location>
        <position position="14"/>
    </location>
    <ligand>
        <name>ATP</name>
        <dbReference type="ChEBI" id="CHEBI:30616"/>
    </ligand>
</feature>
<feature type="binding site" evidence="1">
    <location>
        <position position="16"/>
    </location>
    <ligand>
        <name>ADP</name>
        <dbReference type="ChEBI" id="CHEBI:456216"/>
    </ligand>
</feature>
<feature type="binding site" evidence="1">
    <location>
        <position position="82"/>
    </location>
    <ligand>
        <name>glycerol</name>
        <dbReference type="ChEBI" id="CHEBI:17754"/>
    </ligand>
</feature>
<feature type="binding site" evidence="1">
    <location>
        <position position="82"/>
    </location>
    <ligand>
        <name>sn-glycerol 3-phosphate</name>
        <dbReference type="ChEBI" id="CHEBI:57597"/>
    </ligand>
</feature>
<feature type="binding site" evidence="1">
    <location>
        <position position="83"/>
    </location>
    <ligand>
        <name>glycerol</name>
        <dbReference type="ChEBI" id="CHEBI:17754"/>
    </ligand>
</feature>
<feature type="binding site" evidence="1">
    <location>
        <position position="83"/>
    </location>
    <ligand>
        <name>sn-glycerol 3-phosphate</name>
        <dbReference type="ChEBI" id="CHEBI:57597"/>
    </ligand>
</feature>
<feature type="binding site" evidence="1">
    <location>
        <position position="134"/>
    </location>
    <ligand>
        <name>glycerol</name>
        <dbReference type="ChEBI" id="CHEBI:17754"/>
    </ligand>
</feature>
<feature type="binding site" evidence="1">
    <location>
        <position position="134"/>
    </location>
    <ligand>
        <name>sn-glycerol 3-phosphate</name>
        <dbReference type="ChEBI" id="CHEBI:57597"/>
    </ligand>
</feature>
<feature type="binding site" evidence="1">
    <location>
        <position position="244"/>
    </location>
    <ligand>
        <name>glycerol</name>
        <dbReference type="ChEBI" id="CHEBI:17754"/>
    </ligand>
</feature>
<feature type="binding site" evidence="1">
    <location>
        <position position="244"/>
    </location>
    <ligand>
        <name>sn-glycerol 3-phosphate</name>
        <dbReference type="ChEBI" id="CHEBI:57597"/>
    </ligand>
</feature>
<feature type="binding site" evidence="1">
    <location>
        <position position="245"/>
    </location>
    <ligand>
        <name>glycerol</name>
        <dbReference type="ChEBI" id="CHEBI:17754"/>
    </ligand>
</feature>
<feature type="binding site" evidence="1">
    <location>
        <position position="266"/>
    </location>
    <ligand>
        <name>ADP</name>
        <dbReference type="ChEBI" id="CHEBI:456216"/>
    </ligand>
</feature>
<feature type="binding site" evidence="1">
    <location>
        <position position="266"/>
    </location>
    <ligand>
        <name>ATP</name>
        <dbReference type="ChEBI" id="CHEBI:30616"/>
    </ligand>
</feature>
<feature type="binding site" evidence="1">
    <location>
        <position position="310"/>
    </location>
    <ligand>
        <name>ADP</name>
        <dbReference type="ChEBI" id="CHEBI:456216"/>
    </ligand>
</feature>
<feature type="binding site" evidence="1">
    <location>
        <position position="310"/>
    </location>
    <ligand>
        <name>ATP</name>
        <dbReference type="ChEBI" id="CHEBI:30616"/>
    </ligand>
</feature>
<feature type="binding site" evidence="1">
    <location>
        <position position="314"/>
    </location>
    <ligand>
        <name>ATP</name>
        <dbReference type="ChEBI" id="CHEBI:30616"/>
    </ligand>
</feature>
<feature type="binding site" evidence="1">
    <location>
        <position position="411"/>
    </location>
    <ligand>
        <name>ADP</name>
        <dbReference type="ChEBI" id="CHEBI:456216"/>
    </ligand>
</feature>
<feature type="binding site" evidence="1">
    <location>
        <position position="411"/>
    </location>
    <ligand>
        <name>ATP</name>
        <dbReference type="ChEBI" id="CHEBI:30616"/>
    </ligand>
</feature>
<feature type="binding site" evidence="1">
    <location>
        <position position="415"/>
    </location>
    <ligand>
        <name>ADP</name>
        <dbReference type="ChEBI" id="CHEBI:456216"/>
    </ligand>
</feature>